<protein>
    <recommendedName>
        <fullName>Probable hexose phosphate transport protein</fullName>
    </recommendedName>
</protein>
<sequence length="455" mass="51659">MNVWTKFFQPPKHIKEIEDQEVVKKKYKYWRIRIFYSMFIGYIFYYFTRKSFTFAMPTLIADLGFDKAQLGIIGSTLYFSYGISKFVSGVMSDQSNPRYFMAIGLMITGLTNIFFGMSSSIVLFALWWGLNGWFQGWGWPPCARLLTHWYAKSERGTWWSVWSTSHNIGGALIPILTGFIIDYSGWRGAMYVPGILCIGMGLVLINRLRDTPQSLGLPPIEKYKRDPHHAHHEGKSASEGTEEIERELSTREILFTYVLTNQWLWFLAAASFFIYIVRMAVNDWSALFLIETKHYAAVKANFCVSLFEIGGLFGMLVAGWLSDKISKGNRGPMNVLFSLGLLFAILGMWFSRSHNQWWVDGTLLFVIGFFLYGPQMMIGLAAAELSHKKAAGTASGFTGWFAYFGATFAGYPLGKVTDVWGWKGFFIALLACASIALLLFLPTWNATEKNTRSKA</sequence>
<feature type="chain" id="PRO_0000199888" description="Probable hexose phosphate transport protein">
    <location>
        <begin position="1"/>
        <end position="455"/>
    </location>
</feature>
<feature type="transmembrane region" description="Helical" evidence="2">
    <location>
        <begin position="34"/>
        <end position="54"/>
    </location>
</feature>
<feature type="transmembrane region" description="Helical" evidence="2">
    <location>
        <begin position="70"/>
        <end position="90"/>
    </location>
</feature>
<feature type="transmembrane region" description="Helical" evidence="2">
    <location>
        <begin position="113"/>
        <end position="133"/>
    </location>
</feature>
<feature type="transmembrane region" description="Helical" evidence="2">
    <location>
        <begin position="161"/>
        <end position="181"/>
    </location>
</feature>
<feature type="transmembrane region" description="Helical" evidence="2">
    <location>
        <begin position="185"/>
        <end position="205"/>
    </location>
</feature>
<feature type="transmembrane region" description="Helical" evidence="2">
    <location>
        <begin position="257"/>
        <end position="277"/>
    </location>
</feature>
<feature type="transmembrane region" description="Helical" evidence="2">
    <location>
        <begin position="302"/>
        <end position="322"/>
    </location>
</feature>
<feature type="transmembrane region" description="Helical" evidence="2">
    <location>
        <begin position="331"/>
        <end position="351"/>
    </location>
</feature>
<feature type="transmembrane region" description="Helical" evidence="2">
    <location>
        <begin position="363"/>
        <end position="383"/>
    </location>
</feature>
<feature type="transmembrane region" description="Helical" evidence="2">
    <location>
        <begin position="394"/>
        <end position="414"/>
    </location>
</feature>
<feature type="transmembrane region" description="Helical" evidence="2">
    <location>
        <begin position="424"/>
        <end position="444"/>
    </location>
</feature>
<feature type="region of interest" description="Disordered" evidence="3">
    <location>
        <begin position="219"/>
        <end position="242"/>
    </location>
</feature>
<gene>
    <name type="primary">uhpC</name>
    <name type="ordered locus">CPn_0665</name>
    <name type="ordered locus">CP_0082</name>
    <name type="ordered locus">CpB0691</name>
</gene>
<evidence type="ECO:0000250" key="1"/>
<evidence type="ECO:0000255" key="2"/>
<evidence type="ECO:0000256" key="3">
    <source>
        <dbReference type="SAM" id="MobiDB-lite"/>
    </source>
</evidence>
<evidence type="ECO:0000305" key="4"/>
<dbReference type="EMBL" id="AE001363">
    <property type="protein sequence ID" value="AAD18804.1"/>
    <property type="molecule type" value="Genomic_DNA"/>
</dbReference>
<dbReference type="EMBL" id="AE002161">
    <property type="protein sequence ID" value="AAF37968.1"/>
    <property type="molecule type" value="Genomic_DNA"/>
</dbReference>
<dbReference type="EMBL" id="BA000008">
    <property type="protein sequence ID" value="BAA98872.1"/>
    <property type="molecule type" value="Genomic_DNA"/>
</dbReference>
<dbReference type="EMBL" id="AE009440">
    <property type="protein sequence ID" value="AAP98620.1"/>
    <property type="molecule type" value="Genomic_DNA"/>
</dbReference>
<dbReference type="PIR" id="A72050">
    <property type="entry name" value="A72050"/>
</dbReference>
<dbReference type="PIR" id="F86573">
    <property type="entry name" value="F86573"/>
</dbReference>
<dbReference type="RefSeq" id="NP_224861.1">
    <property type="nucleotide sequence ID" value="NC_000922.1"/>
</dbReference>
<dbReference type="RefSeq" id="WP_010883303.1">
    <property type="nucleotide sequence ID" value="NZ_LN847257.1"/>
</dbReference>
<dbReference type="SMR" id="Q9Z7N9"/>
<dbReference type="STRING" id="406984.CPK_ORF00065"/>
<dbReference type="TCDB" id="2.A.1.4.6">
    <property type="family name" value="the major facilitator superfamily (mfs)"/>
</dbReference>
<dbReference type="GeneID" id="45050716"/>
<dbReference type="KEGG" id="cpa:CP_0082"/>
<dbReference type="KEGG" id="cpj:uhpC"/>
<dbReference type="KEGG" id="cpn:CPn_0665"/>
<dbReference type="KEGG" id="cpt:CpB0691"/>
<dbReference type="PATRIC" id="fig|115713.3.peg.735"/>
<dbReference type="eggNOG" id="COG2271">
    <property type="taxonomic scope" value="Bacteria"/>
</dbReference>
<dbReference type="HOGENOM" id="CLU_001265_31_0_0"/>
<dbReference type="OMA" id="NAWFQGW"/>
<dbReference type="OrthoDB" id="9766638at2"/>
<dbReference type="Proteomes" id="UP000000583">
    <property type="component" value="Chromosome"/>
</dbReference>
<dbReference type="Proteomes" id="UP000000801">
    <property type="component" value="Chromosome"/>
</dbReference>
<dbReference type="GO" id="GO:0005886">
    <property type="term" value="C:plasma membrane"/>
    <property type="evidence" value="ECO:0007669"/>
    <property type="project" value="UniProtKB-SubCell"/>
</dbReference>
<dbReference type="GO" id="GO:0061513">
    <property type="term" value="F:glucose 6-phosphate:phosphate antiporter activity"/>
    <property type="evidence" value="ECO:0007669"/>
    <property type="project" value="TreeGrafter"/>
</dbReference>
<dbReference type="GO" id="GO:0035435">
    <property type="term" value="P:phosphate ion transmembrane transport"/>
    <property type="evidence" value="ECO:0007669"/>
    <property type="project" value="TreeGrafter"/>
</dbReference>
<dbReference type="CDD" id="cd17488">
    <property type="entry name" value="MFS_UhpC"/>
    <property type="match status" value="1"/>
</dbReference>
<dbReference type="Gene3D" id="1.20.1250.20">
    <property type="entry name" value="MFS general substrate transporter like domains"/>
    <property type="match status" value="2"/>
</dbReference>
<dbReference type="InterPro" id="IPR011701">
    <property type="entry name" value="MFS"/>
</dbReference>
<dbReference type="InterPro" id="IPR020846">
    <property type="entry name" value="MFS_dom"/>
</dbReference>
<dbReference type="InterPro" id="IPR036259">
    <property type="entry name" value="MFS_trans_sf"/>
</dbReference>
<dbReference type="InterPro" id="IPR051337">
    <property type="entry name" value="OPA_Antiporter"/>
</dbReference>
<dbReference type="InterPro" id="IPR021159">
    <property type="entry name" value="Sugar-P_transporter_CS"/>
</dbReference>
<dbReference type="InterPro" id="IPR000849">
    <property type="entry name" value="Sugar_P_transporter"/>
</dbReference>
<dbReference type="NCBIfam" id="TIGR00881">
    <property type="entry name" value="2A0104"/>
    <property type="match status" value="1"/>
</dbReference>
<dbReference type="PANTHER" id="PTHR43826">
    <property type="entry name" value="GLUCOSE-6-PHOSPHATE EXCHANGER SLC37A4"/>
    <property type="match status" value="1"/>
</dbReference>
<dbReference type="PANTHER" id="PTHR43826:SF3">
    <property type="entry name" value="GLUCOSE-6-PHOSPHATE EXCHANGER SLC37A4"/>
    <property type="match status" value="1"/>
</dbReference>
<dbReference type="Pfam" id="PF07690">
    <property type="entry name" value="MFS_1"/>
    <property type="match status" value="1"/>
</dbReference>
<dbReference type="PIRSF" id="PIRSF002808">
    <property type="entry name" value="Hexose_phosphate_transp"/>
    <property type="match status" value="1"/>
</dbReference>
<dbReference type="SUPFAM" id="SSF103473">
    <property type="entry name" value="MFS general substrate transporter"/>
    <property type="match status" value="1"/>
</dbReference>
<dbReference type="PROSITE" id="PS00942">
    <property type="entry name" value="GLPT"/>
    <property type="match status" value="1"/>
</dbReference>
<dbReference type="PROSITE" id="PS50850">
    <property type="entry name" value="MFS"/>
    <property type="match status" value="1"/>
</dbReference>
<reference key="1">
    <citation type="journal article" date="1999" name="Nat. Genet.">
        <title>Comparative genomes of Chlamydia pneumoniae and C. trachomatis.</title>
        <authorList>
            <person name="Kalman S."/>
            <person name="Mitchell W.P."/>
            <person name="Marathe R."/>
            <person name="Lammel C.J."/>
            <person name="Fan J."/>
            <person name="Hyman R.W."/>
            <person name="Olinger L."/>
            <person name="Grimwood J."/>
            <person name="Davis R.W."/>
            <person name="Stephens R.S."/>
        </authorList>
    </citation>
    <scope>NUCLEOTIDE SEQUENCE [LARGE SCALE GENOMIC DNA]</scope>
    <source>
        <strain>CWL029</strain>
    </source>
</reference>
<reference key="2">
    <citation type="journal article" date="2000" name="Nucleic Acids Res.">
        <title>Genome sequences of Chlamydia trachomatis MoPn and Chlamydia pneumoniae AR39.</title>
        <authorList>
            <person name="Read T.D."/>
            <person name="Brunham R.C."/>
            <person name="Shen C."/>
            <person name="Gill S.R."/>
            <person name="Heidelberg J.F."/>
            <person name="White O."/>
            <person name="Hickey E.K."/>
            <person name="Peterson J.D."/>
            <person name="Utterback T.R."/>
            <person name="Berry K.J."/>
            <person name="Bass S."/>
            <person name="Linher K.D."/>
            <person name="Weidman J.F."/>
            <person name="Khouri H.M."/>
            <person name="Craven B."/>
            <person name="Bowman C."/>
            <person name="Dodson R.J."/>
            <person name="Gwinn M.L."/>
            <person name="Nelson W.C."/>
            <person name="DeBoy R.T."/>
            <person name="Kolonay J.F."/>
            <person name="McClarty G."/>
            <person name="Salzberg S.L."/>
            <person name="Eisen J.A."/>
            <person name="Fraser C.M."/>
        </authorList>
    </citation>
    <scope>NUCLEOTIDE SEQUENCE [LARGE SCALE GENOMIC DNA]</scope>
    <source>
        <strain>AR39</strain>
    </source>
</reference>
<reference key="3">
    <citation type="journal article" date="2000" name="Nucleic Acids Res.">
        <title>Comparison of whole genome sequences of Chlamydia pneumoniae J138 from Japan and CWL029 from USA.</title>
        <authorList>
            <person name="Shirai M."/>
            <person name="Hirakawa H."/>
            <person name="Kimoto M."/>
            <person name="Tabuchi M."/>
            <person name="Kishi F."/>
            <person name="Ouchi K."/>
            <person name="Shiba T."/>
            <person name="Ishii K."/>
            <person name="Hattori M."/>
            <person name="Kuhara S."/>
            <person name="Nakazawa T."/>
        </authorList>
    </citation>
    <scope>NUCLEOTIDE SEQUENCE [LARGE SCALE GENOMIC DNA]</scope>
    <source>
        <strain>J138</strain>
    </source>
</reference>
<reference key="4">
    <citation type="submission" date="2002-05" db="EMBL/GenBank/DDBJ databases">
        <title>The genome sequence of Chlamydia pneumoniae TW183 and comparison with other Chlamydia strains based on whole genome sequence analysis.</title>
        <authorList>
            <person name="Geng M.M."/>
            <person name="Schuhmacher A."/>
            <person name="Muehldorfer I."/>
            <person name="Bensch K.W."/>
            <person name="Schaefer K.P."/>
            <person name="Schneider S."/>
            <person name="Pohl T."/>
            <person name="Essig A."/>
            <person name="Marre R."/>
            <person name="Melchers K."/>
        </authorList>
    </citation>
    <scope>NUCLEOTIDE SEQUENCE [LARGE SCALE GENOMIC DNA]</scope>
    <source>
        <strain>TW-183</strain>
    </source>
</reference>
<accession>Q9Z7N9</accession>
<accession>Q9JQ19</accession>
<proteinExistence type="inferred from homology"/>
<keyword id="KW-1003">Cell membrane</keyword>
<keyword id="KW-0472">Membrane</keyword>
<keyword id="KW-0762">Sugar transport</keyword>
<keyword id="KW-0812">Transmembrane</keyword>
<keyword id="KW-1133">Transmembrane helix</keyword>
<keyword id="KW-0813">Transport</keyword>
<organism>
    <name type="scientific">Chlamydia pneumoniae</name>
    <name type="common">Chlamydophila pneumoniae</name>
    <dbReference type="NCBI Taxonomy" id="83558"/>
    <lineage>
        <taxon>Bacteria</taxon>
        <taxon>Pseudomonadati</taxon>
        <taxon>Chlamydiota</taxon>
        <taxon>Chlamydiia</taxon>
        <taxon>Chlamydiales</taxon>
        <taxon>Chlamydiaceae</taxon>
        <taxon>Chlamydia/Chlamydophila group</taxon>
        <taxon>Chlamydia</taxon>
    </lineage>
</organism>
<name>UHPT_CHLPN</name>
<comment type="function">
    <text evidence="1">Transport protein for sugar phosphate uptake.</text>
</comment>
<comment type="subcellular location">
    <subcellularLocation>
        <location evidence="4">Cell membrane</location>
        <topology evidence="4">Multi-pass membrane protein</topology>
    </subcellularLocation>
</comment>
<comment type="similarity">
    <text evidence="4">Belongs to the major facilitator superfamily. Organophosphate:Pi antiporter (OPA) (TC 2.A.1.4) family.</text>
</comment>